<sequence>MRLTSKGRYAVTAMLDVALNSEAGPVPLADISERQGISLSYLEQLFSRLRKNGLVSSVRGPGGGYLLGKDASSIAVGEVISAVDESVDATRCQGKGGCQGGDKCLTHALWRDLSDRLTGFLNNITLGELVNNQEVLDVSGRQHTHDAPRTRTQDAIDVKLRA</sequence>
<feature type="chain" id="PRO_0000109563" description="HTH-type transcriptional regulator IscR">
    <location>
        <begin position="1"/>
        <end position="162"/>
    </location>
</feature>
<feature type="domain" description="HTH rrf2-type" evidence="1">
    <location>
        <begin position="2"/>
        <end position="131"/>
    </location>
</feature>
<feature type="DNA-binding region" description="H-T-H motif" evidence="1">
    <location>
        <begin position="28"/>
        <end position="51"/>
    </location>
</feature>
<feature type="region of interest" description="Disordered" evidence="2">
    <location>
        <begin position="140"/>
        <end position="162"/>
    </location>
</feature>
<feature type="compositionally biased region" description="Basic and acidic residues" evidence="2">
    <location>
        <begin position="143"/>
        <end position="162"/>
    </location>
</feature>
<feature type="binding site" evidence="1">
    <location>
        <position position="92"/>
    </location>
    <ligand>
        <name>[2Fe-2S] cluster</name>
        <dbReference type="ChEBI" id="CHEBI:190135"/>
    </ligand>
</feature>
<feature type="binding site" evidence="1">
    <location>
        <position position="98"/>
    </location>
    <ligand>
        <name>[2Fe-2S] cluster</name>
        <dbReference type="ChEBI" id="CHEBI:190135"/>
    </ligand>
</feature>
<feature type="binding site" evidence="1">
    <location>
        <position position="104"/>
    </location>
    <ligand>
        <name>[2Fe-2S] cluster</name>
        <dbReference type="ChEBI" id="CHEBI:190135"/>
    </ligand>
</feature>
<name>ISCR_SHIFL</name>
<keyword id="KW-0001">2Fe-2S</keyword>
<keyword id="KW-0010">Activator</keyword>
<keyword id="KW-0238">DNA-binding</keyword>
<keyword id="KW-0408">Iron</keyword>
<keyword id="KW-0411">Iron-sulfur</keyword>
<keyword id="KW-0479">Metal-binding</keyword>
<keyword id="KW-1185">Reference proteome</keyword>
<keyword id="KW-0678">Repressor</keyword>
<keyword id="KW-0804">Transcription</keyword>
<keyword id="KW-0805">Transcription regulation</keyword>
<comment type="function">
    <text evidence="1">Regulates the transcription of several operons and genes involved in the biogenesis of Fe-S clusters and Fe-S-containing proteins.</text>
</comment>
<comment type="cofactor">
    <cofactor evidence="1">
        <name>[2Fe-2S] cluster</name>
        <dbReference type="ChEBI" id="CHEBI:190135"/>
    </cofactor>
    <text evidence="1">Binds 1 [2Fe-2S] cluster.</text>
</comment>
<accession>P0AGL1</accession>
<accession>P77484</accession>
<organism>
    <name type="scientific">Shigella flexneri</name>
    <dbReference type="NCBI Taxonomy" id="623"/>
    <lineage>
        <taxon>Bacteria</taxon>
        <taxon>Pseudomonadati</taxon>
        <taxon>Pseudomonadota</taxon>
        <taxon>Gammaproteobacteria</taxon>
        <taxon>Enterobacterales</taxon>
        <taxon>Enterobacteriaceae</taxon>
        <taxon>Shigella</taxon>
    </lineage>
</organism>
<dbReference type="EMBL" id="AE005674">
    <property type="protein sequence ID" value="AAN44077.1"/>
    <property type="molecule type" value="Genomic_DNA"/>
</dbReference>
<dbReference type="EMBL" id="AE014073">
    <property type="protein sequence ID" value="AAP17902.1"/>
    <property type="molecule type" value="Genomic_DNA"/>
</dbReference>
<dbReference type="RefSeq" id="NP_708370.1">
    <property type="nucleotide sequence ID" value="NC_004337.2"/>
</dbReference>
<dbReference type="RefSeq" id="WP_001241357.1">
    <property type="nucleotide sequence ID" value="NZ_WPGW01000021.1"/>
</dbReference>
<dbReference type="SMR" id="P0AGL1"/>
<dbReference type="STRING" id="198214.SF2578"/>
<dbReference type="PaxDb" id="198214-SF2578"/>
<dbReference type="GeneID" id="1026947"/>
<dbReference type="GeneID" id="86947421"/>
<dbReference type="KEGG" id="sfl:SF2578"/>
<dbReference type="KEGG" id="sfx:S2750"/>
<dbReference type="PATRIC" id="fig|198214.7.peg.3078"/>
<dbReference type="HOGENOM" id="CLU_107144_0_0_6"/>
<dbReference type="Proteomes" id="UP000001006">
    <property type="component" value="Chromosome"/>
</dbReference>
<dbReference type="Proteomes" id="UP000002673">
    <property type="component" value="Chromosome"/>
</dbReference>
<dbReference type="GO" id="GO:0005829">
    <property type="term" value="C:cytosol"/>
    <property type="evidence" value="ECO:0007669"/>
    <property type="project" value="TreeGrafter"/>
</dbReference>
<dbReference type="GO" id="GO:0051537">
    <property type="term" value="F:2 iron, 2 sulfur cluster binding"/>
    <property type="evidence" value="ECO:0007669"/>
    <property type="project" value="UniProtKB-KW"/>
</dbReference>
<dbReference type="GO" id="GO:0003700">
    <property type="term" value="F:DNA-binding transcription factor activity"/>
    <property type="evidence" value="ECO:0007669"/>
    <property type="project" value="UniProtKB-UniRule"/>
</dbReference>
<dbReference type="GO" id="GO:0003690">
    <property type="term" value="F:double-stranded DNA binding"/>
    <property type="evidence" value="ECO:0007669"/>
    <property type="project" value="UniProtKB-UniRule"/>
</dbReference>
<dbReference type="GO" id="GO:0005506">
    <property type="term" value="F:iron ion binding"/>
    <property type="evidence" value="ECO:0007669"/>
    <property type="project" value="UniProtKB-UniRule"/>
</dbReference>
<dbReference type="FunFam" id="1.10.10.10:FF:000026">
    <property type="entry name" value="HTH-type transcriptional regulator IscR"/>
    <property type="match status" value="1"/>
</dbReference>
<dbReference type="Gene3D" id="1.10.10.10">
    <property type="entry name" value="Winged helix-like DNA-binding domain superfamily/Winged helix DNA-binding domain"/>
    <property type="match status" value="1"/>
</dbReference>
<dbReference type="HAMAP" id="MF_01176">
    <property type="entry name" value="HTH_type_IscR"/>
    <property type="match status" value="1"/>
</dbReference>
<dbReference type="InterPro" id="IPR010242">
    <property type="entry name" value="TF_HTH_IscR"/>
</dbReference>
<dbReference type="InterPro" id="IPR030489">
    <property type="entry name" value="TR_Rrf2-type_CS"/>
</dbReference>
<dbReference type="InterPro" id="IPR000944">
    <property type="entry name" value="Tscrpt_reg_Rrf2"/>
</dbReference>
<dbReference type="InterPro" id="IPR036388">
    <property type="entry name" value="WH-like_DNA-bd_sf"/>
</dbReference>
<dbReference type="InterPro" id="IPR036390">
    <property type="entry name" value="WH_DNA-bd_sf"/>
</dbReference>
<dbReference type="NCBIfam" id="TIGR02010">
    <property type="entry name" value="IscR"/>
    <property type="match status" value="1"/>
</dbReference>
<dbReference type="NCBIfam" id="NF008110">
    <property type="entry name" value="PRK10857.1"/>
    <property type="match status" value="1"/>
</dbReference>
<dbReference type="NCBIfam" id="TIGR00738">
    <property type="entry name" value="rrf2_super"/>
    <property type="match status" value="1"/>
</dbReference>
<dbReference type="PANTHER" id="PTHR33221:SF5">
    <property type="entry name" value="HTH-TYPE TRANSCRIPTIONAL REGULATOR ISCR"/>
    <property type="match status" value="1"/>
</dbReference>
<dbReference type="PANTHER" id="PTHR33221">
    <property type="entry name" value="WINGED HELIX-TURN-HELIX TRANSCRIPTIONAL REGULATOR, RRF2 FAMILY"/>
    <property type="match status" value="1"/>
</dbReference>
<dbReference type="Pfam" id="PF02082">
    <property type="entry name" value="Rrf2"/>
    <property type="match status" value="1"/>
</dbReference>
<dbReference type="SUPFAM" id="SSF46785">
    <property type="entry name" value="Winged helix' DNA-binding domain"/>
    <property type="match status" value="1"/>
</dbReference>
<dbReference type="PROSITE" id="PS01332">
    <property type="entry name" value="HTH_RRF2_1"/>
    <property type="match status" value="1"/>
</dbReference>
<dbReference type="PROSITE" id="PS51197">
    <property type="entry name" value="HTH_RRF2_2"/>
    <property type="match status" value="1"/>
</dbReference>
<protein>
    <recommendedName>
        <fullName evidence="1">HTH-type transcriptional regulator IscR</fullName>
    </recommendedName>
</protein>
<evidence type="ECO:0000255" key="1">
    <source>
        <dbReference type="HAMAP-Rule" id="MF_01176"/>
    </source>
</evidence>
<evidence type="ECO:0000256" key="2">
    <source>
        <dbReference type="SAM" id="MobiDB-lite"/>
    </source>
</evidence>
<proteinExistence type="inferred from homology"/>
<reference key="1">
    <citation type="journal article" date="2002" name="Nucleic Acids Res.">
        <title>Genome sequence of Shigella flexneri 2a: insights into pathogenicity through comparison with genomes of Escherichia coli K12 and O157.</title>
        <authorList>
            <person name="Jin Q."/>
            <person name="Yuan Z."/>
            <person name="Xu J."/>
            <person name="Wang Y."/>
            <person name="Shen Y."/>
            <person name="Lu W."/>
            <person name="Wang J."/>
            <person name="Liu H."/>
            <person name="Yang J."/>
            <person name="Yang F."/>
            <person name="Zhang X."/>
            <person name="Zhang J."/>
            <person name="Yang G."/>
            <person name="Wu H."/>
            <person name="Qu D."/>
            <person name="Dong J."/>
            <person name="Sun L."/>
            <person name="Xue Y."/>
            <person name="Zhao A."/>
            <person name="Gao Y."/>
            <person name="Zhu J."/>
            <person name="Kan B."/>
            <person name="Ding K."/>
            <person name="Chen S."/>
            <person name="Cheng H."/>
            <person name="Yao Z."/>
            <person name="He B."/>
            <person name="Chen R."/>
            <person name="Ma D."/>
            <person name="Qiang B."/>
            <person name="Wen Y."/>
            <person name="Hou Y."/>
            <person name="Yu J."/>
        </authorList>
    </citation>
    <scope>NUCLEOTIDE SEQUENCE [LARGE SCALE GENOMIC DNA]</scope>
    <source>
        <strain>301 / Serotype 2a</strain>
    </source>
</reference>
<reference key="2">
    <citation type="journal article" date="2003" name="Infect. Immun.">
        <title>Complete genome sequence and comparative genomics of Shigella flexneri serotype 2a strain 2457T.</title>
        <authorList>
            <person name="Wei J."/>
            <person name="Goldberg M.B."/>
            <person name="Burland V."/>
            <person name="Venkatesan M.M."/>
            <person name="Deng W."/>
            <person name="Fournier G."/>
            <person name="Mayhew G.F."/>
            <person name="Plunkett G. III"/>
            <person name="Rose D.J."/>
            <person name="Darling A."/>
            <person name="Mau B."/>
            <person name="Perna N.T."/>
            <person name="Payne S.M."/>
            <person name="Runyen-Janecky L.J."/>
            <person name="Zhou S."/>
            <person name="Schwartz D.C."/>
            <person name="Blattner F.R."/>
        </authorList>
    </citation>
    <scope>NUCLEOTIDE SEQUENCE [LARGE SCALE GENOMIC DNA]</scope>
    <source>
        <strain>ATCC 700930 / 2457T / Serotype 2a</strain>
    </source>
</reference>
<gene>
    <name evidence="1" type="primary">iscR</name>
    <name type="synonym">yfhP</name>
    <name type="ordered locus">SF2578</name>
    <name type="ordered locus">S2750</name>
</gene>